<proteinExistence type="inferred from homology"/>
<reference key="1">
    <citation type="submission" date="2006-03" db="EMBL/GenBank/DDBJ databases">
        <title>Complete genome sequence of Francisella tularensis LVS (Live Vaccine Strain).</title>
        <authorList>
            <person name="Chain P."/>
            <person name="Larimer F."/>
            <person name="Land M."/>
            <person name="Stilwagen S."/>
            <person name="Larsson P."/>
            <person name="Bearden S."/>
            <person name="Chu M."/>
            <person name="Oyston P."/>
            <person name="Forsman M."/>
            <person name="Andersson S."/>
            <person name="Lindler L."/>
            <person name="Titball R."/>
            <person name="Garcia E."/>
        </authorList>
    </citation>
    <scope>NUCLEOTIDE SEQUENCE [LARGE SCALE GENOMIC DNA]</scope>
    <source>
        <strain>LVS</strain>
    </source>
</reference>
<sequence length="214" mass="24988">MSTKLQDHFEKITKILSGFGVEGCISYGEITFSIRDQRDIHLILKKLKKEYLFEQLTDVTAVDYLTYGQSDWQVGKVVSQTGFSRGRQQDFKTAAVDNRFEIIYQLLSMANNVRIRVKCKLKDAQIILVDSVSDLWPSANWAEREVYDMFGIYFNNHPDLRRVLTDYGFVGHPLRKDFPQTGYVEMRYDENLGRVVYEPVEIDDRVNTPRVIRN</sequence>
<feature type="chain" id="PRO_0000358097" description="NADH-quinone oxidoreductase subunit C">
    <location>
        <begin position="1"/>
        <end position="214"/>
    </location>
</feature>
<keyword id="KW-0997">Cell inner membrane</keyword>
<keyword id="KW-1003">Cell membrane</keyword>
<keyword id="KW-0472">Membrane</keyword>
<keyword id="KW-0520">NAD</keyword>
<keyword id="KW-0874">Quinone</keyword>
<keyword id="KW-1185">Reference proteome</keyword>
<keyword id="KW-1278">Translocase</keyword>
<keyword id="KW-0813">Transport</keyword>
<keyword id="KW-0830">Ubiquinone</keyword>
<accession>Q2A1F2</accession>
<name>NUOC_FRATH</name>
<protein>
    <recommendedName>
        <fullName evidence="1">NADH-quinone oxidoreductase subunit C</fullName>
        <ecNumber evidence="1">7.1.1.-</ecNumber>
    </recommendedName>
    <alternativeName>
        <fullName evidence="1">NADH dehydrogenase I subunit C</fullName>
    </alternativeName>
    <alternativeName>
        <fullName evidence="1">NDH-1 subunit C</fullName>
    </alternativeName>
</protein>
<comment type="function">
    <text evidence="1">NDH-1 shuttles electrons from NADH, via FMN and iron-sulfur (Fe-S) centers, to quinones in the respiratory chain. The immediate electron acceptor for the enzyme in this species is believed to be ubiquinone. Couples the redox reaction to proton translocation (for every two electrons transferred, four hydrogen ions are translocated across the cytoplasmic membrane), and thus conserves the redox energy in a proton gradient.</text>
</comment>
<comment type="catalytic activity">
    <reaction evidence="1">
        <text>a quinone + NADH + 5 H(+)(in) = a quinol + NAD(+) + 4 H(+)(out)</text>
        <dbReference type="Rhea" id="RHEA:57888"/>
        <dbReference type="ChEBI" id="CHEBI:15378"/>
        <dbReference type="ChEBI" id="CHEBI:24646"/>
        <dbReference type="ChEBI" id="CHEBI:57540"/>
        <dbReference type="ChEBI" id="CHEBI:57945"/>
        <dbReference type="ChEBI" id="CHEBI:132124"/>
    </reaction>
</comment>
<comment type="subunit">
    <text evidence="1">NDH-1 is composed of 14 different subunits. Subunits NuoB, C, D, E, F, and G constitute the peripheral sector of the complex.</text>
</comment>
<comment type="subcellular location">
    <subcellularLocation>
        <location evidence="1">Cell inner membrane</location>
        <topology evidence="1">Peripheral membrane protein</topology>
        <orientation evidence="1">Cytoplasmic side</orientation>
    </subcellularLocation>
</comment>
<comment type="similarity">
    <text evidence="1">Belongs to the complex I 30 kDa subunit family.</text>
</comment>
<gene>
    <name evidence="1" type="primary">nuoC</name>
    <name type="ordered locus">FTL_1828</name>
</gene>
<evidence type="ECO:0000255" key="1">
    <source>
        <dbReference type="HAMAP-Rule" id="MF_01357"/>
    </source>
</evidence>
<organism>
    <name type="scientific">Francisella tularensis subsp. holarctica (strain LVS)</name>
    <dbReference type="NCBI Taxonomy" id="376619"/>
    <lineage>
        <taxon>Bacteria</taxon>
        <taxon>Pseudomonadati</taxon>
        <taxon>Pseudomonadota</taxon>
        <taxon>Gammaproteobacteria</taxon>
        <taxon>Thiotrichales</taxon>
        <taxon>Francisellaceae</taxon>
        <taxon>Francisella</taxon>
    </lineage>
</organism>
<dbReference type="EC" id="7.1.1.-" evidence="1"/>
<dbReference type="EMBL" id="AM233362">
    <property type="protein sequence ID" value="CAJ80267.1"/>
    <property type="molecule type" value="Genomic_DNA"/>
</dbReference>
<dbReference type="RefSeq" id="WP_011457538.1">
    <property type="nucleotide sequence ID" value="NZ_CP009694.1"/>
</dbReference>
<dbReference type="SMR" id="Q2A1F2"/>
<dbReference type="KEGG" id="ftl:FTL_1828"/>
<dbReference type="Proteomes" id="UP000001944">
    <property type="component" value="Chromosome"/>
</dbReference>
<dbReference type="GO" id="GO:0005886">
    <property type="term" value="C:plasma membrane"/>
    <property type="evidence" value="ECO:0007669"/>
    <property type="project" value="UniProtKB-SubCell"/>
</dbReference>
<dbReference type="GO" id="GO:0008137">
    <property type="term" value="F:NADH dehydrogenase (ubiquinone) activity"/>
    <property type="evidence" value="ECO:0007669"/>
    <property type="project" value="InterPro"/>
</dbReference>
<dbReference type="GO" id="GO:0050136">
    <property type="term" value="F:NADH:ubiquinone reductase (non-electrogenic) activity"/>
    <property type="evidence" value="ECO:0007669"/>
    <property type="project" value="UniProtKB-UniRule"/>
</dbReference>
<dbReference type="GO" id="GO:0048038">
    <property type="term" value="F:quinone binding"/>
    <property type="evidence" value="ECO:0007669"/>
    <property type="project" value="UniProtKB-KW"/>
</dbReference>
<dbReference type="Gene3D" id="3.30.460.80">
    <property type="entry name" value="NADH:ubiquinone oxidoreductase, 30kDa subunit"/>
    <property type="match status" value="1"/>
</dbReference>
<dbReference type="HAMAP" id="MF_01357">
    <property type="entry name" value="NDH1_NuoC"/>
    <property type="match status" value="1"/>
</dbReference>
<dbReference type="InterPro" id="IPR010218">
    <property type="entry name" value="NADH_DH_suC"/>
</dbReference>
<dbReference type="InterPro" id="IPR037232">
    <property type="entry name" value="NADH_quin_OxRdtase_su_C/D-like"/>
</dbReference>
<dbReference type="InterPro" id="IPR001268">
    <property type="entry name" value="NADH_UbQ_OxRdtase_30kDa_su"/>
</dbReference>
<dbReference type="InterPro" id="IPR020396">
    <property type="entry name" value="NADH_UbQ_OxRdtase_CS"/>
</dbReference>
<dbReference type="NCBIfam" id="TIGR01961">
    <property type="entry name" value="NuoC_fam"/>
    <property type="match status" value="1"/>
</dbReference>
<dbReference type="NCBIfam" id="NF004730">
    <property type="entry name" value="PRK06074.1-1"/>
    <property type="match status" value="1"/>
</dbReference>
<dbReference type="PANTHER" id="PTHR10884:SF14">
    <property type="entry name" value="NADH DEHYDROGENASE [UBIQUINONE] IRON-SULFUR PROTEIN 3, MITOCHONDRIAL"/>
    <property type="match status" value="1"/>
</dbReference>
<dbReference type="PANTHER" id="PTHR10884">
    <property type="entry name" value="NADH DEHYDROGENASE UBIQUINONE IRON-SULFUR PROTEIN 3"/>
    <property type="match status" value="1"/>
</dbReference>
<dbReference type="Pfam" id="PF00329">
    <property type="entry name" value="Complex1_30kDa"/>
    <property type="match status" value="1"/>
</dbReference>
<dbReference type="SUPFAM" id="SSF143243">
    <property type="entry name" value="Nqo5-like"/>
    <property type="match status" value="1"/>
</dbReference>
<dbReference type="PROSITE" id="PS00542">
    <property type="entry name" value="COMPLEX1_30K"/>
    <property type="match status" value="1"/>
</dbReference>